<accession>Q8IWE5</accession>
<accession>O94928</accession>
<accession>Q5VT65</accession>
<accession>Q5VVD7</accession>
<accession>Q6NUH9</accession>
<accession>Q7L8G1</accession>
<accession>Q8IVT7</accession>
<accession>Q8N2T4</accession>
<accession>Q96AY0</accession>
<accession>Q9NTF7</accession>
<proteinExistence type="evidence at protein level"/>
<organism>
    <name type="scientific">Homo sapiens</name>
    <name type="common">Human</name>
    <dbReference type="NCBI Taxonomy" id="9606"/>
    <lineage>
        <taxon>Eukaryota</taxon>
        <taxon>Metazoa</taxon>
        <taxon>Chordata</taxon>
        <taxon>Craniata</taxon>
        <taxon>Vertebrata</taxon>
        <taxon>Euteleostomi</taxon>
        <taxon>Mammalia</taxon>
        <taxon>Eutheria</taxon>
        <taxon>Euarchontoglires</taxon>
        <taxon>Primates</taxon>
        <taxon>Haplorrhini</taxon>
        <taxon>Catarrhini</taxon>
        <taxon>Hominidae</taxon>
        <taxon>Homo</taxon>
    </lineage>
</organism>
<comment type="function">
    <text evidence="5 7 8 9 10">Plays a role in lysosomes movement and localization at the cell periphery acting as an effector of ARL8B. Required for ARL8B to exert its effects on lysosome location, recruits kinesin-1 to lysosomes and hence direct their movement toward microtubule plus ends. Binding to ARL8B provides a link from lysosomal membranes to plus-end-directed motility (PubMed:22172677, PubMed:24088571, PubMed:25898167, PubMed:28325809). Critical factor involved in NK cell-mediated cytotoxicity. Drives the polarization of cytolytic granules and microtubule-organizing centers (MTOCs) toward the immune synapse between effector NK lymphocytes and target cells (PubMed:24088571). Required for maintenance of the Golgi apparatus organization (PubMed:22172677). May play a role in membrane tubulation (PubMed:15905402).</text>
</comment>
<comment type="subunit">
    <text evidence="5 7 9 10 14">Interacts with KLC2 (via TPR repeats) (Probable). Interacts with KIF5B (PubMed:15905402). Interacts with BORCS5 (PubMed:25898167). Interacts (via RUN domain) with ARL8B (GTP-bound form); PLEKHM1 and PLEKHM2 compete for interaction with ARL8B (PubMed:22172677, PubMed:28325809). Interacts with ARL8A (PubMed:28325809).</text>
</comment>
<comment type="subunit">
    <text evidence="5 6">(Microbial infection) Interacts with the S.typhimurium sifA protein; required for S.typhimurium infection.</text>
</comment>
<comment type="interaction">
    <interactant intactId="EBI-726484">
        <id>Q8IWE5</id>
    </interactant>
    <interactant intactId="EBI-4401353">
        <id>P51151</id>
        <label>RAB9A</label>
    </interactant>
    <organismsDiffer>false</organismsDiffer>
    <experiments>4</experiments>
</comment>
<comment type="interaction">
    <interactant intactId="EBI-726484">
        <id>Q8IWE5</id>
    </interactant>
    <interactant intactId="EBI-6272135">
        <id>Q91YS4</id>
        <label>Klc2</label>
    </interactant>
    <organismsDiffer>true</organismsDiffer>
    <experiments>4</experiments>
</comment>
<comment type="interaction">
    <interactant intactId="EBI-726484">
        <id>Q8IWE5</id>
    </interactant>
    <interactant intactId="EBI-11477981">
        <id>A0A0F6B063</id>
        <label>sifA</label>
    </interactant>
    <organismsDiffer>true</organismsDiffer>
    <experiments>3</experiments>
</comment>
<comment type="interaction">
    <interactant intactId="EBI-726484">
        <id>Q8IWE5</id>
    </interactant>
    <interactant intactId="EBI-10765408">
        <id>Q56061</id>
        <label>sifA</label>
    </interactant>
    <organismsDiffer>true</organismsDiffer>
    <experiments>3</experiments>
</comment>
<comment type="subcellular location">
    <subcellularLocation>
        <location evidence="5">Cytoplasm</location>
    </subcellularLocation>
    <subcellularLocation>
        <location evidence="7">Lysosome membrane</location>
        <topology evidence="13">Peripheral membrane protein</topology>
        <orientation evidence="14">Cytoplasmic side</orientation>
    </subcellularLocation>
</comment>
<comment type="alternative products">
    <event type="alternative splicing"/>
    <isoform>
        <id>Q8IWE5-1</id>
        <name>1</name>
        <sequence type="displayed"/>
    </isoform>
    <isoform>
        <id>Q8IWE5-2</id>
        <name>2</name>
        <sequence type="described" ref="VSP_061018"/>
    </isoform>
</comment>
<comment type="sequence caution" evidence="13">
    <conflict type="erroneous initiation">
        <sequence resource="EMBL-CDS" id="AAH40441"/>
    </conflict>
</comment>
<comment type="sequence caution" evidence="13">
    <conflict type="erroneous initiation">
        <sequence resource="EMBL-CDS" id="BAA74865"/>
    </conflict>
</comment>
<sequence length="1019" mass="112780">MEPGEVKDRILENISLSVKKLQSYFAACEDEIPAIRNHDKVLQRLCEHLDHALLYGLQDLSSGYWVLVVHFTRREAIKQIEVLQHVATNLGRSRAWLYLALNENSLESYLRLFQENLGLLHKYYVKNALVCSHDHLTLFLTLVSGLEFIRFELDLDAPYLDLAPYMPDYYKPQYLLDFEDRLPSSVHGSDSLSLNSFNSVTSTNLEWDDSAIAPSSEDYDFGDVFPAVPSVPSTDWEDGDLTDTVSGPRSTASDLTSSKASTRSPTQRQNPFNEEPAETVSSSDTTPVHTTSQEKEEAQALDPPDACTELEVIRVTKKKKIGKKKKSRSDEEASPLHPACSQKKCAKQGDGDSRNGSPSLGRDSPDTMLASPQEEGEGPSSTTESSERSEPGLLIPEMKDTSMERLGQPLSKVIDQLNGQLDPSTWCSRAEPPDQSFRTGSPGDAPERPPLCDFSEGLSAPMDFYRFTVESPSTVTSGGGHHDPAGLGQPLHVPSSPEAAGQEEEGGGGEGQTPRPLEDTTREAQELEAQLSLVREGPVSEPEPGTQEVLCQLKRDQPSPCLSSAEDSGVDEGQGSPSEMVHSSEFRVDNNHLLLLMIHVFRENEEQLFKMIRMSTGHMEGNLQLLYVLLTDCYVYLLRKGATEKPYLVEEAVSYNELDYVSVGLDQQTVKLVCTNRRKQFLLDTADVALAEFFLASLKSAMIKGCREPPYPSILTDATMEKLALAKFVAQESKCEASAVTVRFYGLVHWEDPTDESLGPTPCHCSPPEGTITKEGMLHYKAGTSYLGKEHWKTCFVVLSNGILYQYPDRTDVIPLLSVNMGGEQCGGCRRANTTDRPHAFQVILSDRPCLELSAESEAEMAEWMQHLCQAVSKGVIPQGVAPSPCIPCCLVLTDDRLFTCHEDCQTSFFRSLGTAKLGDISAVSTEPGKEYCVLEFSQDSQQLLPPWVIYLSCTSELDRLLSALNSGWKTIYQVDLPHTAIQEASNKKKFEDALSLIHSAWQRSDSLCRGRASRDPWC</sequence>
<evidence type="ECO:0000250" key="1">
    <source>
        <dbReference type="UniProtKB" id="Q80TQ5"/>
    </source>
</evidence>
<evidence type="ECO:0000255" key="2">
    <source>
        <dbReference type="PROSITE-ProRule" id="PRU00145"/>
    </source>
</evidence>
<evidence type="ECO:0000255" key="3">
    <source>
        <dbReference type="PROSITE-ProRule" id="PRU00178"/>
    </source>
</evidence>
<evidence type="ECO:0000256" key="4">
    <source>
        <dbReference type="SAM" id="MobiDB-lite"/>
    </source>
</evidence>
<evidence type="ECO:0000269" key="5">
    <source>
    </source>
</evidence>
<evidence type="ECO:0000269" key="6">
    <source>
    </source>
</evidence>
<evidence type="ECO:0000269" key="7">
    <source>
    </source>
</evidence>
<evidence type="ECO:0000269" key="8">
    <source>
    </source>
</evidence>
<evidence type="ECO:0000269" key="9">
    <source>
    </source>
</evidence>
<evidence type="ECO:0000269" key="10">
    <source>
    </source>
</evidence>
<evidence type="ECO:0000303" key="11">
    <source>
    </source>
</evidence>
<evidence type="ECO:0000303" key="12">
    <source>
    </source>
</evidence>
<evidence type="ECO:0000305" key="13"/>
<evidence type="ECO:0000305" key="14">
    <source>
    </source>
</evidence>
<evidence type="ECO:0000312" key="15">
    <source>
        <dbReference type="HGNC" id="HGNC:29131"/>
    </source>
</evidence>
<evidence type="ECO:0007744" key="16">
    <source>
    </source>
</evidence>
<evidence type="ECO:0007829" key="17">
    <source>
        <dbReference type="PDB" id="3CXB"/>
    </source>
</evidence>
<evidence type="ECO:0007829" key="18">
    <source>
        <dbReference type="PDB" id="3HW2"/>
    </source>
</evidence>
<evidence type="ECO:0007829" key="19">
    <source>
        <dbReference type="PDB" id="3ZFW"/>
    </source>
</evidence>
<name>PKHM2_HUMAN</name>
<protein>
    <recommendedName>
        <fullName evidence="13">Pleckstrin homology domain-containing family M member 2</fullName>
        <shortName>PH domain-containing family M member 2</shortName>
    </recommendedName>
    <alternativeName>
        <fullName evidence="11">Salmonella-induced filaments A and kinesin-interacting protein</fullName>
        <shortName evidence="11">SifA and kinesin-interacting protein</shortName>
    </alternativeName>
</protein>
<feature type="chain" id="PRO_0000309455" description="Pleckstrin homology domain-containing family M member 2">
    <location>
        <begin position="1"/>
        <end position="1019"/>
    </location>
</feature>
<feature type="domain" description="RUN" evidence="3">
    <location>
        <begin position="36"/>
        <end position="158"/>
    </location>
</feature>
<feature type="domain" description="PH" evidence="2">
    <location>
        <begin position="771"/>
        <end position="873"/>
    </location>
</feature>
<feature type="region of interest" description="Interaction with KIF5B" evidence="5">
    <location>
        <begin position="1"/>
        <end position="310"/>
    </location>
</feature>
<feature type="region of interest" description="Disordered" evidence="4">
    <location>
        <begin position="230"/>
        <end position="458"/>
    </location>
</feature>
<feature type="region of interest" description="Disordered" evidence="4">
    <location>
        <begin position="471"/>
        <end position="525"/>
    </location>
</feature>
<feature type="region of interest" description="Disordered" evidence="4">
    <location>
        <begin position="557"/>
        <end position="581"/>
    </location>
</feature>
<feature type="region of interest" description="Interaction with sifA">
    <location>
        <begin position="762"/>
        <end position="885"/>
    </location>
</feature>
<feature type="compositionally biased region" description="Polar residues" evidence="4">
    <location>
        <begin position="243"/>
        <end position="272"/>
    </location>
</feature>
<feature type="compositionally biased region" description="Polar residues" evidence="4">
    <location>
        <begin position="279"/>
        <end position="291"/>
    </location>
</feature>
<feature type="compositionally biased region" description="Basic residues" evidence="4">
    <location>
        <begin position="315"/>
        <end position="327"/>
    </location>
</feature>
<feature type="compositionally biased region" description="Polar residues" evidence="4">
    <location>
        <begin position="417"/>
        <end position="427"/>
    </location>
</feature>
<feature type="compositionally biased region" description="Basic and acidic residues" evidence="4">
    <location>
        <begin position="516"/>
        <end position="525"/>
    </location>
</feature>
<feature type="modified residue" description="N-acetylmethionine" evidence="16">
    <location>
        <position position="1"/>
    </location>
</feature>
<feature type="modified residue" description="Phosphoserine" evidence="1">
    <location>
        <position position="441"/>
    </location>
</feature>
<feature type="splice variant" id="VSP_061018" description="In isoform 2.">
    <location>
        <begin position="218"/>
        <end position="237"/>
    </location>
</feature>
<feature type="sequence variant" id="VAR_036950" description="In dbSNP:rs12091750.">
    <original>I</original>
    <variation>T</variation>
    <location>
        <position position="32"/>
    </location>
</feature>
<feature type="mutagenesis site" description="No effect on lysosomal location; loss of interaction with kinesin-1 and movement of lysosomes to the periphery; when associated with A-236-237-A." evidence="7">
    <original>WD</original>
    <variation>AA</variation>
    <location>
        <begin position="207"/>
        <end position="208"/>
    </location>
</feature>
<feature type="mutagenesis site" description="No effect on lysosomal location; loss of interaction with kinesin-1 and movement of lysosomes to the periphery; when associated with A-207-208-A." evidence="7">
    <original>WE</original>
    <variation>AA</variation>
    <location>
        <begin position="236"/>
        <end position="237"/>
    </location>
</feature>
<feature type="mutagenesis site" description="Loss of interaction with sifA." evidence="6">
    <original>G</original>
    <variation>D</variation>
    <location>
        <position position="828"/>
    </location>
</feature>
<feature type="mutagenesis site" description="Loss of interaction with sifA." evidence="6">
    <original>R</original>
    <variation>D</variation>
    <location>
        <position position="830"/>
    </location>
</feature>
<feature type="mutagenesis site" description="Alters interaction with sifA." evidence="6">
    <original>R</original>
    <variation>A</variation>
    <location>
        <position position="831"/>
    </location>
</feature>
<feature type="mutagenesis site" description="Loss of interaction with sifA." evidence="6">
    <original>C</original>
    <variation>D</variation>
    <location>
        <position position="869"/>
    </location>
</feature>
<feature type="sequence conflict" description="In Ref. 4; AAH30545." evidence="13" ref="4">
    <original>VFR</original>
    <variation>ASG</variation>
    <location>
        <begin position="600"/>
        <end position="602"/>
    </location>
</feature>
<feature type="turn" evidence="19">
    <location>
        <begin position="210"/>
        <end position="212"/>
    </location>
</feature>
<feature type="strand" evidence="17">
    <location>
        <begin position="774"/>
        <end position="780"/>
    </location>
</feature>
<feature type="strand" evidence="18">
    <location>
        <begin position="787"/>
        <end position="789"/>
    </location>
</feature>
<feature type="strand" evidence="17">
    <location>
        <begin position="793"/>
        <end position="800"/>
    </location>
</feature>
<feature type="strand" evidence="17">
    <location>
        <begin position="803"/>
        <end position="811"/>
    </location>
</feature>
<feature type="strand" evidence="17">
    <location>
        <begin position="816"/>
        <end position="820"/>
    </location>
</feature>
<feature type="strand" evidence="17">
    <location>
        <begin position="826"/>
        <end position="831"/>
    </location>
</feature>
<feature type="strand" evidence="17">
    <location>
        <begin position="840"/>
        <end position="845"/>
    </location>
</feature>
<feature type="strand" evidence="17">
    <location>
        <begin position="851"/>
        <end position="854"/>
    </location>
</feature>
<feature type="helix" evidence="17">
    <location>
        <begin position="858"/>
        <end position="872"/>
    </location>
</feature>
<reference key="1">
    <citation type="journal article" date="1998" name="DNA Res.">
        <title>Prediction of the coding sequences of unidentified human genes. XII. The complete sequences of 100 new cDNA clones from brain which code for large proteins in vitro.</title>
        <authorList>
            <person name="Nagase T."/>
            <person name="Ishikawa K."/>
            <person name="Suyama M."/>
            <person name="Kikuno R."/>
            <person name="Hirosawa M."/>
            <person name="Miyajima N."/>
            <person name="Tanaka A."/>
            <person name="Kotani H."/>
            <person name="Nomura N."/>
            <person name="Ohara O."/>
        </authorList>
    </citation>
    <scope>NUCLEOTIDE SEQUENCE [LARGE SCALE MRNA]</scope>
    <source>
        <tissue>Brain</tissue>
    </source>
</reference>
<reference key="2">
    <citation type="journal article" date="2006" name="Nature">
        <title>The DNA sequence and biological annotation of human chromosome 1.</title>
        <authorList>
            <person name="Gregory S.G."/>
            <person name="Barlow K.F."/>
            <person name="McLay K.E."/>
            <person name="Kaul R."/>
            <person name="Swarbreck D."/>
            <person name="Dunham A."/>
            <person name="Scott C.E."/>
            <person name="Howe K.L."/>
            <person name="Woodfine K."/>
            <person name="Spencer C.C.A."/>
            <person name="Jones M.C."/>
            <person name="Gillson C."/>
            <person name="Searle S."/>
            <person name="Zhou Y."/>
            <person name="Kokocinski F."/>
            <person name="McDonald L."/>
            <person name="Evans R."/>
            <person name="Phillips K."/>
            <person name="Atkinson A."/>
            <person name="Cooper R."/>
            <person name="Jones C."/>
            <person name="Hall R.E."/>
            <person name="Andrews T.D."/>
            <person name="Lloyd C."/>
            <person name="Ainscough R."/>
            <person name="Almeida J.P."/>
            <person name="Ambrose K.D."/>
            <person name="Anderson F."/>
            <person name="Andrew R.W."/>
            <person name="Ashwell R.I.S."/>
            <person name="Aubin K."/>
            <person name="Babbage A.K."/>
            <person name="Bagguley C.L."/>
            <person name="Bailey J."/>
            <person name="Beasley H."/>
            <person name="Bethel G."/>
            <person name="Bird C.P."/>
            <person name="Bray-Allen S."/>
            <person name="Brown J.Y."/>
            <person name="Brown A.J."/>
            <person name="Buckley D."/>
            <person name="Burton J."/>
            <person name="Bye J."/>
            <person name="Carder C."/>
            <person name="Chapman J.C."/>
            <person name="Clark S.Y."/>
            <person name="Clarke G."/>
            <person name="Clee C."/>
            <person name="Cobley V."/>
            <person name="Collier R.E."/>
            <person name="Corby N."/>
            <person name="Coville G.J."/>
            <person name="Davies J."/>
            <person name="Deadman R."/>
            <person name="Dunn M."/>
            <person name="Earthrowl M."/>
            <person name="Ellington A.G."/>
            <person name="Errington H."/>
            <person name="Frankish A."/>
            <person name="Frankland J."/>
            <person name="French L."/>
            <person name="Garner P."/>
            <person name="Garnett J."/>
            <person name="Gay L."/>
            <person name="Ghori M.R.J."/>
            <person name="Gibson R."/>
            <person name="Gilby L.M."/>
            <person name="Gillett W."/>
            <person name="Glithero R.J."/>
            <person name="Grafham D.V."/>
            <person name="Griffiths C."/>
            <person name="Griffiths-Jones S."/>
            <person name="Grocock R."/>
            <person name="Hammond S."/>
            <person name="Harrison E.S.I."/>
            <person name="Hart E."/>
            <person name="Haugen E."/>
            <person name="Heath P.D."/>
            <person name="Holmes S."/>
            <person name="Holt K."/>
            <person name="Howden P.J."/>
            <person name="Hunt A.R."/>
            <person name="Hunt S.E."/>
            <person name="Hunter G."/>
            <person name="Isherwood J."/>
            <person name="James R."/>
            <person name="Johnson C."/>
            <person name="Johnson D."/>
            <person name="Joy A."/>
            <person name="Kay M."/>
            <person name="Kershaw J.K."/>
            <person name="Kibukawa M."/>
            <person name="Kimberley A.M."/>
            <person name="King A."/>
            <person name="Knights A.J."/>
            <person name="Lad H."/>
            <person name="Laird G."/>
            <person name="Lawlor S."/>
            <person name="Leongamornlert D.A."/>
            <person name="Lloyd D.M."/>
            <person name="Loveland J."/>
            <person name="Lovell J."/>
            <person name="Lush M.J."/>
            <person name="Lyne R."/>
            <person name="Martin S."/>
            <person name="Mashreghi-Mohammadi M."/>
            <person name="Matthews L."/>
            <person name="Matthews N.S.W."/>
            <person name="McLaren S."/>
            <person name="Milne S."/>
            <person name="Mistry S."/>
            <person name="Moore M.J.F."/>
            <person name="Nickerson T."/>
            <person name="O'Dell C.N."/>
            <person name="Oliver K."/>
            <person name="Palmeiri A."/>
            <person name="Palmer S.A."/>
            <person name="Parker A."/>
            <person name="Patel D."/>
            <person name="Pearce A.V."/>
            <person name="Peck A.I."/>
            <person name="Pelan S."/>
            <person name="Phelps K."/>
            <person name="Phillimore B.J."/>
            <person name="Plumb R."/>
            <person name="Rajan J."/>
            <person name="Raymond C."/>
            <person name="Rouse G."/>
            <person name="Saenphimmachak C."/>
            <person name="Sehra H.K."/>
            <person name="Sheridan E."/>
            <person name="Shownkeen R."/>
            <person name="Sims S."/>
            <person name="Skuce C.D."/>
            <person name="Smith M."/>
            <person name="Steward C."/>
            <person name="Subramanian S."/>
            <person name="Sycamore N."/>
            <person name="Tracey A."/>
            <person name="Tromans A."/>
            <person name="Van Helmond Z."/>
            <person name="Wall M."/>
            <person name="Wallis J.M."/>
            <person name="White S."/>
            <person name="Whitehead S.L."/>
            <person name="Wilkinson J.E."/>
            <person name="Willey D.L."/>
            <person name="Williams H."/>
            <person name="Wilming L."/>
            <person name="Wray P.W."/>
            <person name="Wu Z."/>
            <person name="Coulson A."/>
            <person name="Vaudin M."/>
            <person name="Sulston J.E."/>
            <person name="Durbin R.M."/>
            <person name="Hubbard T."/>
            <person name="Wooster R."/>
            <person name="Dunham I."/>
            <person name="Carter N.P."/>
            <person name="McVean G."/>
            <person name="Ross M.T."/>
            <person name="Harrow J."/>
            <person name="Olson M.V."/>
            <person name="Beck S."/>
            <person name="Rogers J."/>
            <person name="Bentley D.R."/>
        </authorList>
    </citation>
    <scope>NUCLEOTIDE SEQUENCE [LARGE SCALE GENOMIC DNA]</scope>
</reference>
<reference key="3">
    <citation type="submission" date="2005-07" db="EMBL/GenBank/DDBJ databases">
        <authorList>
            <person name="Mural R.J."/>
            <person name="Istrail S."/>
            <person name="Sutton G.G."/>
            <person name="Florea L."/>
            <person name="Halpern A.L."/>
            <person name="Mobarry C.M."/>
            <person name="Lippert R."/>
            <person name="Walenz B."/>
            <person name="Shatkay H."/>
            <person name="Dew I."/>
            <person name="Miller J.R."/>
            <person name="Flanigan M.J."/>
            <person name="Edwards N.J."/>
            <person name="Bolanos R."/>
            <person name="Fasulo D."/>
            <person name="Halldorsson B.V."/>
            <person name="Hannenhalli S."/>
            <person name="Turner R."/>
            <person name="Yooseph S."/>
            <person name="Lu F."/>
            <person name="Nusskern D.R."/>
            <person name="Shue B.C."/>
            <person name="Zheng X.H."/>
            <person name="Zhong F."/>
            <person name="Delcher A.L."/>
            <person name="Huson D.H."/>
            <person name="Kravitz S.A."/>
            <person name="Mouchard L."/>
            <person name="Reinert K."/>
            <person name="Remington K.A."/>
            <person name="Clark A.G."/>
            <person name="Waterman M.S."/>
            <person name="Eichler E.E."/>
            <person name="Adams M.D."/>
            <person name="Hunkapiller M.W."/>
            <person name="Myers E.W."/>
            <person name="Venter J.C."/>
        </authorList>
    </citation>
    <scope>NUCLEOTIDE SEQUENCE [LARGE SCALE GENOMIC DNA]</scope>
</reference>
<reference key="4">
    <citation type="journal article" date="2004" name="Genome Res.">
        <title>The status, quality, and expansion of the NIH full-length cDNA project: the Mammalian Gene Collection (MGC).</title>
        <authorList>
            <consortium name="The MGC Project Team"/>
        </authorList>
    </citation>
    <scope>NUCLEOTIDE SEQUENCE [LARGE SCALE MRNA]</scope>
    <source>
        <tissue>Bone</tissue>
        <tissue>Cervix</tissue>
        <tissue>Kidney</tissue>
        <tissue>Ovary</tissue>
        <tissue>Testis</tissue>
    </source>
</reference>
<reference key="5">
    <citation type="journal article" date="2007" name="BMC Genomics">
        <title>The full-ORF clone resource of the German cDNA consortium.</title>
        <authorList>
            <person name="Bechtel S."/>
            <person name="Rosenfelder H."/>
            <person name="Duda A."/>
            <person name="Schmidt C.P."/>
            <person name="Ernst U."/>
            <person name="Wellenreuther R."/>
            <person name="Mehrle A."/>
            <person name="Schuster C."/>
            <person name="Bahr A."/>
            <person name="Bloecker H."/>
            <person name="Heubner D."/>
            <person name="Hoerlein A."/>
            <person name="Michel G."/>
            <person name="Wedler H."/>
            <person name="Koehrer K."/>
            <person name="Ottenwaelder B."/>
            <person name="Poustka A."/>
            <person name="Wiemann S."/>
            <person name="Schupp I."/>
        </authorList>
    </citation>
    <scope>NUCLEOTIDE SEQUENCE [LARGE SCALE MRNA] OF 824-1019</scope>
    <source>
        <tissue>Testis</tissue>
    </source>
</reference>
<reference key="6">
    <citation type="journal article" date="2005" name="Science">
        <title>The intracellular fate of Salmonella depends on the recruitment of kinesin.</title>
        <authorList>
            <person name="Boucrot E."/>
            <person name="Henry T."/>
            <person name="Borg J.-P."/>
            <person name="Gorvel J.-P."/>
            <person name="Meresse S."/>
        </authorList>
    </citation>
    <scope>FUNCTION</scope>
    <scope>SUBCELLULAR LOCATION</scope>
    <scope>INTERACTION WITH KIF5B AND SALMONELLA TYPHIMURIUM SIFA PROTEIN (MICROBIAL INFECTION)</scope>
</reference>
<reference key="7">
    <citation type="journal article" date="2008" name="J. Proteome Res.">
        <title>Combining protein-based IMAC, peptide-based IMAC, and MudPIT for efficient phosphoproteomic analysis.</title>
        <authorList>
            <person name="Cantin G.T."/>
            <person name="Yi W."/>
            <person name="Lu B."/>
            <person name="Park S.K."/>
            <person name="Xu T."/>
            <person name="Lee J.-D."/>
            <person name="Yates J.R. III"/>
        </authorList>
    </citation>
    <scope>IDENTIFICATION BY MASS SPECTROMETRY [LARGE SCALE ANALYSIS]</scope>
    <source>
        <tissue>Cervix carcinoma</tissue>
    </source>
</reference>
<reference key="8">
    <citation type="journal article" date="2008" name="Proc. Natl. Acad. Sci. U.S.A.">
        <title>A quantitative atlas of mitotic phosphorylation.</title>
        <authorList>
            <person name="Dephoure N."/>
            <person name="Zhou C."/>
            <person name="Villen J."/>
            <person name="Beausoleil S.A."/>
            <person name="Bakalarski C.E."/>
            <person name="Elledge S.J."/>
            <person name="Gygi S.P."/>
        </authorList>
    </citation>
    <scope>IDENTIFICATION BY MASS SPECTROMETRY [LARGE SCALE ANALYSIS]</scope>
    <source>
        <tissue>Cervix carcinoma</tissue>
    </source>
</reference>
<reference key="9">
    <citation type="journal article" date="2011" name="Dev. Cell">
        <title>Arl8 and SKIP act together to link lysosomes to kinesin-1.</title>
        <authorList>
            <person name="Rosa-Ferreira C."/>
            <person name="Munro S."/>
        </authorList>
    </citation>
    <scope>FUNCTION</scope>
    <scope>INTERACTION WITH ARL8B</scope>
    <scope>SUBCELLULAR LOCATION</scope>
    <scope>ALTERNATIVE SPLICING</scope>
    <scope>MUTAGENESIS OF 207-TRP-ASP-208 AND 236-TRP-GLU-237</scope>
</reference>
<reference key="10">
    <citation type="journal article" date="2012" name="Proc. Natl. Acad. Sci. U.S.A.">
        <title>N-terminal acetylome analyses and functional insights of the N-terminal acetyltransferase NatB.</title>
        <authorList>
            <person name="Van Damme P."/>
            <person name="Lasa M."/>
            <person name="Polevoda B."/>
            <person name="Gazquez C."/>
            <person name="Elosegui-Artola A."/>
            <person name="Kim D.S."/>
            <person name="De Juan-Pardo E."/>
            <person name="Demeyer K."/>
            <person name="Hole K."/>
            <person name="Larrea E."/>
            <person name="Timmerman E."/>
            <person name="Prieto J."/>
            <person name="Arnesen T."/>
            <person name="Sherman F."/>
            <person name="Gevaert K."/>
            <person name="Aldabe R."/>
        </authorList>
    </citation>
    <scope>ACETYLATION [LARGE SCALE ANALYSIS] AT MET-1</scope>
    <scope>IDENTIFICATION BY MASS SPECTROMETRY [LARGE SCALE ANALYSIS]</scope>
</reference>
<reference key="11">
    <citation type="journal article" date="2013" name="J. Proteome Res.">
        <title>Toward a comprehensive characterization of a human cancer cell phosphoproteome.</title>
        <authorList>
            <person name="Zhou H."/>
            <person name="Di Palma S."/>
            <person name="Preisinger C."/>
            <person name="Peng M."/>
            <person name="Polat A.N."/>
            <person name="Heck A.J."/>
            <person name="Mohammed S."/>
        </authorList>
    </citation>
    <scope>IDENTIFICATION BY MASS SPECTROMETRY [LARGE SCALE ANALYSIS]</scope>
    <source>
        <tissue>Cervix carcinoma</tissue>
        <tissue>Erythroleukemia</tissue>
    </source>
</reference>
<reference key="12">
    <citation type="journal article" date="2013" name="Mol. Biol. Cell">
        <title>Arf-like GTPase Arl8b regulates lytic granule polarization and natural killer cell-mediated cytotoxicity.</title>
        <authorList>
            <person name="Tuli A."/>
            <person name="Thiery J."/>
            <person name="James A.M."/>
            <person name="Michelet X."/>
            <person name="Sharma M."/>
            <person name="Garg S."/>
            <person name="Sanborn K.B."/>
            <person name="Orange J.S."/>
            <person name="Lieberman J."/>
            <person name="Brenner M.B."/>
        </authorList>
    </citation>
    <scope>FUNCTION</scope>
</reference>
<reference key="13">
    <citation type="journal article" date="2015" name="Dev. Cell">
        <title>BORC, a multisubunit complex that regulates lysosome positioning.</title>
        <authorList>
            <person name="Pu J."/>
            <person name="Schindler C."/>
            <person name="Jia R."/>
            <person name="Jarnik M."/>
            <person name="Backlund P."/>
            <person name="Bonifacino J.S."/>
        </authorList>
    </citation>
    <scope>FUNCTION</scope>
    <scope>INTERACTION WITH BORCS5</scope>
</reference>
<reference key="14">
    <citation type="journal article" date="2017" name="J. Cell Biol.">
        <title>The Rab7 effector PLEKHM1 binds Arl8b to promote cargo traffic to lysosomes.</title>
        <authorList>
            <person name="Marwaha R."/>
            <person name="Arya S.B."/>
            <person name="Jagga D."/>
            <person name="Kaur H."/>
            <person name="Tuli A."/>
            <person name="Sharma M."/>
        </authorList>
    </citation>
    <scope>FUNCTION</scope>
    <scope>INTERACTION WITH ARL8A AND ARL8B</scope>
    <scope>SUBCELLULAR LOCATION</scope>
</reference>
<reference key="15">
    <citation type="journal article" date="2008" name="Cell Host Microbe">
        <title>Structure and function of Salmonella SifA indicate that its interactions with SKIP, SseJ, and RhoA family GTPases induce endosomal tubulation.</title>
        <authorList>
            <person name="Ohlson M.B."/>
            <person name="Huang Z."/>
            <person name="Alto N.M."/>
            <person name="Blanc M.-P."/>
            <person name="Dixon J.E."/>
            <person name="Chai J."/>
            <person name="Miller S.I."/>
        </authorList>
    </citation>
    <scope>X-RAY CRYSTALLOGRAPHY (2.60 ANGSTROMS) OF 773-884 IN COMPLEX WITH SALMONELLA TYPHIMURIUM SIFA PROTEIN (MICROBIAL INFECTION)</scope>
    <scope>MUTAGENESIS OF GLY-828; ARG-830; ARG-831 AND CYS-869</scope>
</reference>
<gene>
    <name evidence="15" type="primary">PLEKHM2</name>
    <name type="synonym">KIAA0842</name>
    <name evidence="11 12" type="synonym">SKIP</name>
</gene>
<keyword id="KW-0002">3D-structure</keyword>
<keyword id="KW-0007">Acetylation</keyword>
<keyword id="KW-0025">Alternative splicing</keyword>
<keyword id="KW-0963">Cytoplasm</keyword>
<keyword id="KW-0458">Lysosome</keyword>
<keyword id="KW-0472">Membrane</keyword>
<keyword id="KW-0597">Phosphoprotein</keyword>
<keyword id="KW-1267">Proteomics identification</keyword>
<keyword id="KW-1185">Reference proteome</keyword>
<dbReference type="EMBL" id="AB020649">
    <property type="protein sequence ID" value="BAA74865.1"/>
    <property type="status" value="ALT_INIT"/>
    <property type="molecule type" value="mRNA"/>
</dbReference>
<dbReference type="EMBL" id="AL450998">
    <property type="status" value="NOT_ANNOTATED_CDS"/>
    <property type="molecule type" value="Genomic_DNA"/>
</dbReference>
<dbReference type="EMBL" id="AL606758">
    <property type="status" value="NOT_ANNOTATED_CDS"/>
    <property type="molecule type" value="Genomic_DNA"/>
</dbReference>
<dbReference type="EMBL" id="AL121992">
    <property type="status" value="NOT_ANNOTATED_CDS"/>
    <property type="molecule type" value="Genomic_DNA"/>
</dbReference>
<dbReference type="EMBL" id="CH471167">
    <property type="protein sequence ID" value="EAW51745.1"/>
    <property type="molecule type" value="Genomic_DNA"/>
</dbReference>
<dbReference type="EMBL" id="BC008002">
    <property type="protein sequence ID" value="AAH08002.1"/>
    <property type="molecule type" value="mRNA"/>
</dbReference>
<dbReference type="EMBL" id="BC016488">
    <property type="protein sequence ID" value="AAH16488.1"/>
    <property type="molecule type" value="mRNA"/>
</dbReference>
<dbReference type="EMBL" id="BC030545">
    <property type="protein sequence ID" value="AAH30545.1"/>
    <property type="molecule type" value="mRNA"/>
</dbReference>
<dbReference type="EMBL" id="BC040441">
    <property type="protein sequence ID" value="AAH40441.1"/>
    <property type="status" value="ALT_INIT"/>
    <property type="molecule type" value="mRNA"/>
</dbReference>
<dbReference type="EMBL" id="BC042103">
    <property type="protein sequence ID" value="AAH42103.1"/>
    <property type="molecule type" value="mRNA"/>
</dbReference>
<dbReference type="EMBL" id="AL137297">
    <property type="protein sequence ID" value="CAB70684.1"/>
    <property type="molecule type" value="mRNA"/>
</dbReference>
<dbReference type="CCDS" id="CCDS44063.1">
    <molecule id="Q8IWE5-1"/>
</dbReference>
<dbReference type="CCDS" id="CCDS90868.1">
    <molecule id="Q8IWE5-2"/>
</dbReference>
<dbReference type="PIR" id="T46361">
    <property type="entry name" value="T46361"/>
</dbReference>
<dbReference type="RefSeq" id="NP_001397684.1">
    <molecule id="Q8IWE5-2"/>
    <property type="nucleotide sequence ID" value="NM_001410755.1"/>
</dbReference>
<dbReference type="RefSeq" id="NP_055979.2">
    <molecule id="Q8IWE5-1"/>
    <property type="nucleotide sequence ID" value="NM_015164.4"/>
</dbReference>
<dbReference type="RefSeq" id="XP_005245847.1">
    <property type="nucleotide sequence ID" value="XM_005245790.3"/>
</dbReference>
<dbReference type="PDB" id="3CXB">
    <property type="method" value="X-ray"/>
    <property type="resolution" value="2.60 A"/>
    <property type="chains" value="B=773-884"/>
</dbReference>
<dbReference type="PDB" id="3HW2">
    <property type="method" value="X-ray"/>
    <property type="resolution" value="3.30 A"/>
    <property type="chains" value="B=771-875"/>
</dbReference>
<dbReference type="PDB" id="3ZFW">
    <property type="method" value="X-ray"/>
    <property type="resolution" value="2.90 A"/>
    <property type="chains" value="X/Y=203-212"/>
</dbReference>
<dbReference type="PDB" id="8JCA">
    <property type="method" value="X-ray"/>
    <property type="resolution" value="1.65 A"/>
    <property type="chains" value="B=1-165"/>
</dbReference>
<dbReference type="PDBsum" id="3CXB"/>
<dbReference type="PDBsum" id="3HW2"/>
<dbReference type="PDBsum" id="3ZFW"/>
<dbReference type="PDBsum" id="8JCA"/>
<dbReference type="SMR" id="Q8IWE5"/>
<dbReference type="BioGRID" id="116814">
    <property type="interactions" value="13"/>
</dbReference>
<dbReference type="CORUM" id="Q8IWE5"/>
<dbReference type="DIP" id="DIP-46410N"/>
<dbReference type="ELM" id="Q8IWE5"/>
<dbReference type="FunCoup" id="Q8IWE5">
    <property type="interactions" value="212"/>
</dbReference>
<dbReference type="IntAct" id="Q8IWE5">
    <property type="interactions" value="8"/>
</dbReference>
<dbReference type="STRING" id="9606.ENSP00000364956"/>
<dbReference type="GlyGen" id="Q8IWE5">
    <property type="glycosylation" value="2 sites"/>
</dbReference>
<dbReference type="iPTMnet" id="Q8IWE5"/>
<dbReference type="PhosphoSitePlus" id="Q8IWE5"/>
<dbReference type="BioMuta" id="PLEKHM2"/>
<dbReference type="DMDM" id="160419243"/>
<dbReference type="jPOST" id="Q8IWE5"/>
<dbReference type="MassIVE" id="Q8IWE5"/>
<dbReference type="PaxDb" id="9606-ENSP00000364956"/>
<dbReference type="PeptideAtlas" id="Q8IWE5"/>
<dbReference type="ProteomicsDB" id="65459"/>
<dbReference type="ProteomicsDB" id="70850"/>
<dbReference type="Pumba" id="Q8IWE5"/>
<dbReference type="Antibodypedia" id="47979">
    <property type="antibodies" value="72 antibodies from 22 providers"/>
</dbReference>
<dbReference type="DNASU" id="23207"/>
<dbReference type="Ensembl" id="ENST00000375793.2">
    <molecule id="Q8IWE5-2"/>
    <property type="protein sequence ID" value="ENSP00000364950.2"/>
    <property type="gene ID" value="ENSG00000116786.14"/>
</dbReference>
<dbReference type="Ensembl" id="ENST00000375799.8">
    <molecule id="Q8IWE5-1"/>
    <property type="protein sequence ID" value="ENSP00000364956.3"/>
    <property type="gene ID" value="ENSG00000116786.14"/>
</dbReference>
<dbReference type="GeneID" id="23207"/>
<dbReference type="KEGG" id="hsa:23207"/>
<dbReference type="MANE-Select" id="ENST00000375799.8">
    <property type="protein sequence ID" value="ENSP00000364956.3"/>
    <property type="RefSeq nucleotide sequence ID" value="NM_015164.4"/>
    <property type="RefSeq protein sequence ID" value="NP_055979.2"/>
</dbReference>
<dbReference type="UCSC" id="uc010obo.2">
    <molecule id="Q8IWE5-1"/>
    <property type="organism name" value="human"/>
</dbReference>
<dbReference type="AGR" id="HGNC:29131"/>
<dbReference type="CTD" id="23207"/>
<dbReference type="DisGeNET" id="23207"/>
<dbReference type="GeneCards" id="PLEKHM2"/>
<dbReference type="HGNC" id="HGNC:29131">
    <property type="gene designation" value="PLEKHM2"/>
</dbReference>
<dbReference type="HPA" id="ENSG00000116786">
    <property type="expression patterns" value="Tissue enhanced (brain)"/>
</dbReference>
<dbReference type="MalaCards" id="PLEKHM2"/>
<dbReference type="MIM" id="609613">
    <property type="type" value="gene"/>
</dbReference>
<dbReference type="neXtProt" id="NX_Q8IWE5"/>
<dbReference type="OpenTargets" id="ENSG00000116786"/>
<dbReference type="Orphanet" id="54260">
    <property type="disease" value="Left ventricular noncompaction"/>
</dbReference>
<dbReference type="PharmGKB" id="PA134888781"/>
<dbReference type="VEuPathDB" id="HostDB:ENSG00000116786"/>
<dbReference type="eggNOG" id="KOG1829">
    <property type="taxonomic scope" value="Eukaryota"/>
</dbReference>
<dbReference type="GeneTree" id="ENSGT00390000015175"/>
<dbReference type="HOGENOM" id="CLU_012258_0_0_1"/>
<dbReference type="InParanoid" id="Q8IWE5"/>
<dbReference type="OMA" id="PSEMIHS"/>
<dbReference type="OrthoDB" id="9983817at2759"/>
<dbReference type="PAN-GO" id="Q8IWE5">
    <property type="GO annotations" value="6 GO annotations based on evolutionary models"/>
</dbReference>
<dbReference type="PhylomeDB" id="Q8IWE5"/>
<dbReference type="TreeFam" id="TF332641"/>
<dbReference type="PathwayCommons" id="Q8IWE5"/>
<dbReference type="SignaLink" id="Q8IWE5"/>
<dbReference type="BioGRID-ORCS" id="23207">
    <property type="hits" value="17 hits in 1155 CRISPR screens"/>
</dbReference>
<dbReference type="ChiTaRS" id="PLEKHM2">
    <property type="organism name" value="human"/>
</dbReference>
<dbReference type="EvolutionaryTrace" id="Q8IWE5"/>
<dbReference type="GeneWiki" id="PLEKHM2"/>
<dbReference type="GenomeRNAi" id="23207"/>
<dbReference type="Pharos" id="Q8IWE5">
    <property type="development level" value="Tbio"/>
</dbReference>
<dbReference type="PRO" id="PR:Q8IWE5"/>
<dbReference type="Proteomes" id="UP000005640">
    <property type="component" value="Chromosome 1"/>
</dbReference>
<dbReference type="RNAct" id="Q8IWE5">
    <property type="molecule type" value="protein"/>
</dbReference>
<dbReference type="Bgee" id="ENSG00000116786">
    <property type="expression patterns" value="Expressed in right frontal lobe and 189 other cell types or tissues"/>
</dbReference>
<dbReference type="ExpressionAtlas" id="Q8IWE5">
    <property type="expression patterns" value="baseline and differential"/>
</dbReference>
<dbReference type="GO" id="GO:0010008">
    <property type="term" value="C:endosome membrane"/>
    <property type="evidence" value="ECO:0000314"/>
    <property type="project" value="AgBase"/>
</dbReference>
<dbReference type="GO" id="GO:0005765">
    <property type="term" value="C:lysosomal membrane"/>
    <property type="evidence" value="ECO:0000314"/>
    <property type="project" value="UniProtKB"/>
</dbReference>
<dbReference type="GO" id="GO:0019894">
    <property type="term" value="F:kinesin binding"/>
    <property type="evidence" value="ECO:0000314"/>
    <property type="project" value="UniProtKB"/>
</dbReference>
<dbReference type="GO" id="GO:0007030">
    <property type="term" value="P:Golgi organization"/>
    <property type="evidence" value="ECO:0000315"/>
    <property type="project" value="UniProtKB"/>
</dbReference>
<dbReference type="GO" id="GO:0032418">
    <property type="term" value="P:lysosome localization"/>
    <property type="evidence" value="ECO:0000314"/>
    <property type="project" value="UniProtKB"/>
</dbReference>
<dbReference type="GO" id="GO:0042267">
    <property type="term" value="P:natural killer cell mediated cytotoxicity"/>
    <property type="evidence" value="ECO:0000315"/>
    <property type="project" value="UniProtKB"/>
</dbReference>
<dbReference type="GO" id="GO:0032880">
    <property type="term" value="P:regulation of protein localization"/>
    <property type="evidence" value="ECO:0000315"/>
    <property type="project" value="AgBase"/>
</dbReference>
<dbReference type="CDD" id="cd13309">
    <property type="entry name" value="PH_SKIP"/>
    <property type="match status" value="1"/>
</dbReference>
<dbReference type="CDD" id="cd17680">
    <property type="entry name" value="RUN_PLEKHM2"/>
    <property type="match status" value="1"/>
</dbReference>
<dbReference type="FunFam" id="2.30.29.30:FF:000148">
    <property type="entry name" value="pleckstrin homology domain-containing family M member 2"/>
    <property type="match status" value="1"/>
</dbReference>
<dbReference type="FunFam" id="1.20.58.900:FF:000004">
    <property type="entry name" value="pleckstrin homology domain-containing family M member 2 isoform X2"/>
    <property type="match status" value="1"/>
</dbReference>
<dbReference type="Gene3D" id="1.20.58.900">
    <property type="match status" value="1"/>
</dbReference>
<dbReference type="Gene3D" id="2.30.29.30">
    <property type="entry name" value="Pleckstrin-homology domain (PH domain)/Phosphotyrosine-binding domain (PTB)"/>
    <property type="match status" value="1"/>
</dbReference>
<dbReference type="InterPro" id="IPR011993">
    <property type="entry name" value="PH-like_dom_sf"/>
</dbReference>
<dbReference type="InterPro" id="IPR001849">
    <property type="entry name" value="PH_domain"/>
</dbReference>
<dbReference type="InterPro" id="IPR053015">
    <property type="entry name" value="PH_domain-containing_M2"/>
</dbReference>
<dbReference type="InterPro" id="IPR004012">
    <property type="entry name" value="Run_dom"/>
</dbReference>
<dbReference type="InterPro" id="IPR037213">
    <property type="entry name" value="Run_dom_sf"/>
</dbReference>
<dbReference type="InterPro" id="IPR047327">
    <property type="entry name" value="RUN_PLEKHM2"/>
</dbReference>
<dbReference type="PANTHER" id="PTHR46556">
    <property type="entry name" value="PLECKSTRIN HOMOLOGY DOMAIN-CONTAINING FAMILY M MEMBER 2"/>
    <property type="match status" value="1"/>
</dbReference>
<dbReference type="PANTHER" id="PTHR46556:SF1">
    <property type="entry name" value="PLECKSTRIN HOMOLOGY DOMAIN-CONTAINING FAMILY M MEMBER 2"/>
    <property type="match status" value="1"/>
</dbReference>
<dbReference type="Pfam" id="PF00169">
    <property type="entry name" value="PH"/>
    <property type="match status" value="1"/>
</dbReference>
<dbReference type="Pfam" id="PF23142">
    <property type="entry name" value="PH_PLEKHM2"/>
    <property type="match status" value="1"/>
</dbReference>
<dbReference type="Pfam" id="PF02759">
    <property type="entry name" value="RUN"/>
    <property type="match status" value="1"/>
</dbReference>
<dbReference type="SMART" id="SM00233">
    <property type="entry name" value="PH"/>
    <property type="match status" value="1"/>
</dbReference>
<dbReference type="SMART" id="SM00593">
    <property type="entry name" value="RUN"/>
    <property type="match status" value="1"/>
</dbReference>
<dbReference type="SUPFAM" id="SSF50729">
    <property type="entry name" value="PH domain-like"/>
    <property type="match status" value="1"/>
</dbReference>
<dbReference type="SUPFAM" id="SSF140741">
    <property type="entry name" value="RUN domain-like"/>
    <property type="match status" value="1"/>
</dbReference>
<dbReference type="PROSITE" id="PS50003">
    <property type="entry name" value="PH_DOMAIN"/>
    <property type="match status" value="1"/>
</dbReference>
<dbReference type="PROSITE" id="PS50826">
    <property type="entry name" value="RUN"/>
    <property type="match status" value="1"/>
</dbReference>